<comment type="function">
    <text evidence="1 2">Thrombin, which cleaves bonds after Arg and Lys, converts fibrinogen to fibrin and activates factors V, VII, VIII, XIII, and, in complex with thrombomodulin, protein C. Functions in blood homeostasis, inflammation and wound healing (By similarity). Activates coagulation factor XI (F11); activation is promoted by the contact with negatively charged surfaces (By similarity). Triggers the production of pro-inflammatory cytokines, such as MCP-1/CCL2 and IL8/CXCL8, in endothelial cells (By similarity).</text>
</comment>
<comment type="catalytic activity">
    <reaction>
        <text>Selective cleavage of Arg-|-Gly bonds in fibrinogen to form fibrin and release fibrinopeptides A and B.</text>
        <dbReference type="EC" id="3.4.21.5"/>
    </reaction>
</comment>
<comment type="activity regulation">
    <text evidence="2">Activity is promoted in the presence of negatively charged surfaces, such as polyphosphate and dextran sulfate (By similarity). Inhibited by SERPINA5 (By similarity).</text>
</comment>
<comment type="subunit">
    <text evidence="2">Heterodimer (named alpha-thrombin) of a light and a heavy chain; disulfide-linked. Forms a heterodimer with SERPINA5. In plasma, interacts (via N-terminus) with alpha-1-microglobulin; this interaction does not prevent the activation of prothrombin to thrombin.</text>
</comment>
<comment type="PTM">
    <text evidence="1">The gamma-carboxyglutamyl residues, which bind calcium ions, result from the carboxylation of glutamyl residues by a microsomal enzyme, the vitamin K-dependent carboxylase. The modified residues are necessary for the calcium-dependent interaction with a negatively charged phospholipid surface, which is essential for the conversion of prothrombin to thrombin (By similarity).</text>
</comment>
<comment type="PTM">
    <text evidence="2">In the penultimate step of the coagulation cascade, prothrombin is converted to thrombin by the prothrombinase complex composed of factor Xa (F10), cofactor Va (F5), and phospholipids. This activation requires factor Xa-catalyzed sequential cleavage at 2 sites, Arg-315 and Arg-364, along 2 possible pathways. In the first pathway, the first cleavage occurs at Arg-315, leading to the formation of the inactive intermediate prethrombin-2. This pathway preferentially occurs on platelets and in the absence of cofactor Va. In the second pathway, the first cleavage occurs at Arg-364, which separates protease domain into 2 chains that remain connected through a disulfide bond and generates the active intermediate meizothrombin. The presence of cofactor Va directs activation along the meizothrombin pathway and greatly accelerates the rate of cleavage at Arg-364, but has a smaller effect on the cleavage of meizothrombin at Arg-315. Meizothrombin accumulates as an intermediate when prothrombinase is assembled on the membrane of red blood cells.</text>
</comment>
<comment type="miscellaneous">
    <text evidence="1">Thrombin can itself cleave the N-terminal fragment (fragment 1) of the prothrombin, prior to its activation by factor Xa.</text>
</comment>
<comment type="similarity">
    <text evidence="6">Belongs to the peptidase S1 family.</text>
</comment>
<keyword id="KW-0011">Acute phase</keyword>
<keyword id="KW-0094">Blood coagulation</keyword>
<keyword id="KW-0106">Calcium</keyword>
<keyword id="KW-0165">Cleavage on pair of basic residues</keyword>
<keyword id="KW-1015">Disulfide bond</keyword>
<keyword id="KW-0301">Gamma-carboxyglutamic acid</keyword>
<keyword id="KW-0325">Glycoprotein</keyword>
<keyword id="KW-0356">Hemostasis</keyword>
<keyword id="KW-0378">Hydrolase</keyword>
<keyword id="KW-0420">Kringle</keyword>
<keyword id="KW-0645">Protease</keyword>
<keyword id="KW-1185">Reference proteome</keyword>
<keyword id="KW-0677">Repeat</keyword>
<keyword id="KW-0720">Serine protease</keyword>
<keyword id="KW-0732">Signal</keyword>
<keyword id="KW-0865">Zymogen</keyword>
<reference key="1">
    <citation type="submission" date="2006-05" db="EMBL/GenBank/DDBJ databases">
        <authorList>
            <person name="Chen Y."/>
            <person name="Tan W."/>
            <person name="Cheng J."/>
        </authorList>
    </citation>
    <scope>NUCLEOTIDE SEQUENCE [MRNA]</scope>
    <source>
        <tissue>Liver</tissue>
    </source>
</reference>
<protein>
    <recommendedName>
        <fullName>Prothrombin</fullName>
        <ecNumber>3.4.21.5</ecNumber>
    </recommendedName>
    <alternativeName>
        <fullName>Coagulation factor II</fullName>
    </alternativeName>
    <component>
        <recommendedName>
            <fullName>Activation peptide fragment 1</fullName>
        </recommendedName>
    </component>
    <component>
        <recommendedName>
            <fullName>Activation peptide fragment 2</fullName>
        </recommendedName>
    </component>
    <component>
        <recommendedName>
            <fullName>Thrombin light chain</fullName>
        </recommendedName>
    </component>
    <component>
        <recommendedName>
            <fullName>Thrombin heavy chain</fullName>
        </recommendedName>
    </component>
</protein>
<organism>
    <name type="scientific">Sus scrofa</name>
    <name type="common">Pig</name>
    <dbReference type="NCBI Taxonomy" id="9823"/>
    <lineage>
        <taxon>Eukaryota</taxon>
        <taxon>Metazoa</taxon>
        <taxon>Chordata</taxon>
        <taxon>Craniata</taxon>
        <taxon>Vertebrata</taxon>
        <taxon>Euteleostomi</taxon>
        <taxon>Mammalia</taxon>
        <taxon>Eutheria</taxon>
        <taxon>Laurasiatheria</taxon>
        <taxon>Artiodactyla</taxon>
        <taxon>Suina</taxon>
        <taxon>Suidae</taxon>
        <taxon>Sus</taxon>
    </lineage>
</organism>
<proteinExistence type="evidence at transcript level"/>
<feature type="signal peptide" evidence="4">
    <location>
        <begin position="1"/>
        <end position="24"/>
    </location>
</feature>
<feature type="propeptide" id="PRO_0000285892" evidence="1">
    <location>
        <begin position="25"/>
        <end position="43"/>
    </location>
</feature>
<feature type="chain" id="PRO_0000285893" description="Prothrombin">
    <location>
        <begin position="44"/>
        <end position="623"/>
    </location>
</feature>
<feature type="peptide" id="PRO_0000285894" description="Activation peptide fragment 1" evidence="1">
    <location>
        <begin position="44"/>
        <end position="199"/>
    </location>
</feature>
<feature type="peptide" id="PRO_0000285918" description="Activation peptide fragment 2" evidence="1">
    <location>
        <begin position="200"/>
        <end position="328"/>
    </location>
</feature>
<feature type="chain" id="PRO_0000285919" description="Thrombin light chain" evidence="1">
    <location>
        <begin position="316"/>
        <end position="364"/>
    </location>
</feature>
<feature type="chain" id="PRO_0000285920" description="Thrombin heavy chain" evidence="1">
    <location>
        <begin position="365"/>
        <end position="622"/>
    </location>
</feature>
<feature type="domain" description="Gla" evidence="7">
    <location>
        <begin position="44"/>
        <end position="90"/>
    </location>
</feature>
<feature type="domain" description="Kringle 1" evidence="5">
    <location>
        <begin position="108"/>
        <end position="187"/>
    </location>
</feature>
<feature type="domain" description="Kringle 2" evidence="5">
    <location>
        <begin position="213"/>
        <end position="292"/>
    </location>
</feature>
<feature type="domain" description="Peptidase S1" evidence="6">
    <location>
        <begin position="365"/>
        <end position="619"/>
    </location>
</feature>
<feature type="region of interest" description="High affinity receptor-binding region which is also known as the TP508 peptide" evidence="1">
    <location>
        <begin position="552"/>
        <end position="574"/>
    </location>
</feature>
<feature type="active site" description="Charge relay system" evidence="1">
    <location>
        <position position="407"/>
    </location>
</feature>
<feature type="active site" description="Charge relay system" evidence="1">
    <location>
        <position position="463"/>
    </location>
</feature>
<feature type="active site" description="Charge relay system" evidence="1">
    <location>
        <position position="569"/>
    </location>
</feature>
<feature type="site" description="Cleavage; by thrombin" evidence="1">
    <location>
        <begin position="199"/>
        <end position="200"/>
    </location>
</feature>
<feature type="site" description="Cleavage; by factor Xa" evidence="2">
    <location>
        <begin position="315"/>
        <end position="316"/>
    </location>
</feature>
<feature type="site" description="Cleavage; by factor Xa" evidence="2">
    <location>
        <begin position="364"/>
        <end position="365"/>
    </location>
</feature>
<feature type="modified residue" description="4-carboxyglutamate" evidence="3 7">
    <location>
        <position position="50"/>
    </location>
</feature>
<feature type="modified residue" description="4-carboxyglutamate" evidence="3 7">
    <location>
        <position position="51"/>
    </location>
</feature>
<feature type="modified residue" description="4-carboxyglutamate" evidence="3 7">
    <location>
        <position position="58"/>
    </location>
</feature>
<feature type="modified residue" description="4-carboxyglutamate" evidence="3 7">
    <location>
        <position position="60"/>
    </location>
</feature>
<feature type="modified residue" description="4-carboxyglutamate" evidence="3 7">
    <location>
        <position position="63"/>
    </location>
</feature>
<feature type="modified residue" description="4-carboxyglutamate" evidence="3 7">
    <location>
        <position position="64"/>
    </location>
</feature>
<feature type="modified residue" description="4-carboxyglutamate" evidence="3 7">
    <location>
        <position position="69"/>
    </location>
</feature>
<feature type="modified residue" description="4-carboxyglutamate" evidence="3 7">
    <location>
        <position position="70"/>
    </location>
</feature>
<feature type="modified residue" description="4-carboxyglutamate" evidence="3 7">
    <location>
        <position position="73"/>
    </location>
</feature>
<feature type="modified residue" description="4-carboxyglutamate" evidence="3 7">
    <location>
        <position position="76"/>
    </location>
</feature>
<feature type="glycosylation site" description="N-linked (GlcNAc...) asparagine" evidence="4">
    <location>
        <position position="120"/>
    </location>
</feature>
<feature type="glycosylation site" description="N-linked (GlcNAc...) asparagine" evidence="4">
    <location>
        <position position="144"/>
    </location>
</feature>
<feature type="glycosylation site" description="N-linked (GlcNAc...) asparagine" evidence="4">
    <location>
        <position position="417"/>
    </location>
</feature>
<feature type="disulfide bond" evidence="1">
    <location>
        <begin position="61"/>
        <end position="66"/>
    </location>
</feature>
<feature type="disulfide bond" evidence="1">
    <location>
        <begin position="91"/>
        <end position="104"/>
    </location>
</feature>
<feature type="disulfide bond" evidence="1">
    <location>
        <begin position="109"/>
        <end position="187"/>
    </location>
</feature>
<feature type="disulfide bond" evidence="1">
    <location>
        <begin position="130"/>
        <end position="170"/>
    </location>
</feature>
<feature type="disulfide bond" evidence="1">
    <location>
        <begin position="158"/>
        <end position="182"/>
    </location>
</feature>
<feature type="disulfide bond" evidence="1">
    <location>
        <begin position="214"/>
        <end position="292"/>
    </location>
</feature>
<feature type="disulfide bond" evidence="1">
    <location>
        <begin position="235"/>
        <end position="275"/>
    </location>
</feature>
<feature type="disulfide bond" evidence="1">
    <location>
        <begin position="263"/>
        <end position="287"/>
    </location>
</feature>
<feature type="disulfide bond" description="Interchain (between light and heavy chains)" evidence="5 6 7">
    <location>
        <begin position="337"/>
        <end position="483"/>
    </location>
</feature>
<feature type="disulfide bond" evidence="1">
    <location>
        <begin position="392"/>
        <end position="408"/>
    </location>
</feature>
<feature type="disulfide bond" evidence="1">
    <location>
        <begin position="537"/>
        <end position="551"/>
    </location>
</feature>
<feature type="disulfide bond" evidence="1">
    <location>
        <begin position="565"/>
        <end position="595"/>
    </location>
</feature>
<accession>Q19AZ8</accession>
<dbReference type="EC" id="3.4.21.5"/>
<dbReference type="EMBL" id="DQ530370">
    <property type="protein sequence ID" value="ABF82359.1"/>
    <property type="molecule type" value="mRNA"/>
</dbReference>
<dbReference type="RefSeq" id="NP_001116457.1">
    <property type="nucleotide sequence ID" value="NM_001122985.1"/>
</dbReference>
<dbReference type="SMR" id="Q19AZ8"/>
<dbReference type="FunCoup" id="Q19AZ8">
    <property type="interactions" value="137"/>
</dbReference>
<dbReference type="STRING" id="9823.ENSSSCP00000014081"/>
<dbReference type="MEROPS" id="S01.217"/>
<dbReference type="GlyCosmos" id="Q19AZ8">
    <property type="glycosylation" value="3 sites, No reported glycans"/>
</dbReference>
<dbReference type="GlyGen" id="Q19AZ8">
    <property type="glycosylation" value="3 sites"/>
</dbReference>
<dbReference type="PaxDb" id="9823-ENSSSCP00000014081"/>
<dbReference type="PeptideAtlas" id="Q19AZ8"/>
<dbReference type="GeneID" id="100144442"/>
<dbReference type="KEGG" id="ssc:100144442"/>
<dbReference type="CTD" id="2147"/>
<dbReference type="eggNOG" id="ENOG502QTSX">
    <property type="taxonomic scope" value="Eukaryota"/>
</dbReference>
<dbReference type="InParanoid" id="Q19AZ8"/>
<dbReference type="OrthoDB" id="6380398at2759"/>
<dbReference type="Proteomes" id="UP000008227">
    <property type="component" value="Unplaced"/>
</dbReference>
<dbReference type="Proteomes" id="UP000314985">
    <property type="component" value="Unplaced"/>
</dbReference>
<dbReference type="Proteomes" id="UP000694570">
    <property type="component" value="Unplaced"/>
</dbReference>
<dbReference type="Proteomes" id="UP000694571">
    <property type="component" value="Unplaced"/>
</dbReference>
<dbReference type="Proteomes" id="UP000694720">
    <property type="component" value="Unplaced"/>
</dbReference>
<dbReference type="Proteomes" id="UP000694722">
    <property type="component" value="Unplaced"/>
</dbReference>
<dbReference type="Proteomes" id="UP000694723">
    <property type="component" value="Unplaced"/>
</dbReference>
<dbReference type="Proteomes" id="UP000694724">
    <property type="component" value="Unplaced"/>
</dbReference>
<dbReference type="Proteomes" id="UP000694725">
    <property type="component" value="Unplaced"/>
</dbReference>
<dbReference type="Proteomes" id="UP000694726">
    <property type="component" value="Unplaced"/>
</dbReference>
<dbReference type="Proteomes" id="UP000694727">
    <property type="component" value="Unplaced"/>
</dbReference>
<dbReference type="Proteomes" id="UP000694728">
    <property type="component" value="Unplaced"/>
</dbReference>
<dbReference type="GO" id="GO:0062023">
    <property type="term" value="C:collagen-containing extracellular matrix"/>
    <property type="evidence" value="ECO:0000318"/>
    <property type="project" value="GO_Central"/>
</dbReference>
<dbReference type="GO" id="GO:0005615">
    <property type="term" value="C:extracellular space"/>
    <property type="evidence" value="ECO:0000318"/>
    <property type="project" value="GO_Central"/>
</dbReference>
<dbReference type="GO" id="GO:0005509">
    <property type="term" value="F:calcium ion binding"/>
    <property type="evidence" value="ECO:0007669"/>
    <property type="project" value="InterPro"/>
</dbReference>
<dbReference type="GO" id="GO:0004252">
    <property type="term" value="F:serine-type endopeptidase activity"/>
    <property type="evidence" value="ECO:0000318"/>
    <property type="project" value="GO_Central"/>
</dbReference>
<dbReference type="GO" id="GO:0006953">
    <property type="term" value="P:acute-phase response"/>
    <property type="evidence" value="ECO:0007669"/>
    <property type="project" value="UniProtKB-KW"/>
</dbReference>
<dbReference type="GO" id="GO:0030168">
    <property type="term" value="P:platelet activation"/>
    <property type="evidence" value="ECO:0000318"/>
    <property type="project" value="GO_Central"/>
</dbReference>
<dbReference type="GO" id="GO:0030194">
    <property type="term" value="P:positive regulation of blood coagulation"/>
    <property type="evidence" value="ECO:0000318"/>
    <property type="project" value="GO_Central"/>
</dbReference>
<dbReference type="GO" id="GO:0006508">
    <property type="term" value="P:proteolysis"/>
    <property type="evidence" value="ECO:0007669"/>
    <property type="project" value="UniProtKB-KW"/>
</dbReference>
<dbReference type="CDD" id="cd00108">
    <property type="entry name" value="KR"/>
    <property type="match status" value="2"/>
</dbReference>
<dbReference type="CDD" id="cd00190">
    <property type="entry name" value="Tryp_SPc"/>
    <property type="match status" value="1"/>
</dbReference>
<dbReference type="FunFam" id="2.40.10.10:FF:000060">
    <property type="entry name" value="Acrosin"/>
    <property type="match status" value="1"/>
</dbReference>
<dbReference type="FunFam" id="2.40.10.10:FF:000085">
    <property type="entry name" value="Prothrombin"/>
    <property type="match status" value="1"/>
</dbReference>
<dbReference type="FunFam" id="2.40.20.10:FF:000015">
    <property type="entry name" value="Prothrombin"/>
    <property type="match status" value="1"/>
</dbReference>
<dbReference type="FunFam" id="4.10.140.10:FF:000001">
    <property type="entry name" value="Prothrombin"/>
    <property type="match status" value="1"/>
</dbReference>
<dbReference type="FunFam" id="4.10.740.10:FF:000001">
    <property type="entry name" value="vitamin K-dependent protein S"/>
    <property type="match status" value="1"/>
</dbReference>
<dbReference type="Gene3D" id="2.40.20.10">
    <property type="entry name" value="Plasminogen Kringle 4"/>
    <property type="match status" value="2"/>
</dbReference>
<dbReference type="Gene3D" id="4.10.140.10">
    <property type="entry name" value="Thrombin light chain domain"/>
    <property type="match status" value="1"/>
</dbReference>
<dbReference type="Gene3D" id="2.40.10.10">
    <property type="entry name" value="Trypsin-like serine proteases"/>
    <property type="match status" value="2"/>
</dbReference>
<dbReference type="InterPro" id="IPR035972">
    <property type="entry name" value="GLA-like_dom_SF"/>
</dbReference>
<dbReference type="InterPro" id="IPR000294">
    <property type="entry name" value="GLA_domain"/>
</dbReference>
<dbReference type="InterPro" id="IPR000001">
    <property type="entry name" value="Kringle"/>
</dbReference>
<dbReference type="InterPro" id="IPR013806">
    <property type="entry name" value="Kringle-like"/>
</dbReference>
<dbReference type="InterPro" id="IPR018056">
    <property type="entry name" value="Kringle_CS"/>
</dbReference>
<dbReference type="InterPro" id="IPR038178">
    <property type="entry name" value="Kringle_sf"/>
</dbReference>
<dbReference type="InterPro" id="IPR009003">
    <property type="entry name" value="Peptidase_S1_PA"/>
</dbReference>
<dbReference type="InterPro" id="IPR043504">
    <property type="entry name" value="Peptidase_S1_PA_chymotrypsin"/>
</dbReference>
<dbReference type="InterPro" id="IPR001314">
    <property type="entry name" value="Peptidase_S1A"/>
</dbReference>
<dbReference type="InterPro" id="IPR003966">
    <property type="entry name" value="Prothrombin/thrombin"/>
</dbReference>
<dbReference type="InterPro" id="IPR051659">
    <property type="entry name" value="Serine_Protease_S1-Domain"/>
</dbReference>
<dbReference type="InterPro" id="IPR018992">
    <property type="entry name" value="Thrombin_light_chain"/>
</dbReference>
<dbReference type="InterPro" id="IPR037111">
    <property type="entry name" value="Thrombin_light_chain_sf"/>
</dbReference>
<dbReference type="InterPro" id="IPR001254">
    <property type="entry name" value="Trypsin_dom"/>
</dbReference>
<dbReference type="InterPro" id="IPR018114">
    <property type="entry name" value="TRYPSIN_HIS"/>
</dbReference>
<dbReference type="InterPro" id="IPR033116">
    <property type="entry name" value="TRYPSIN_SER"/>
</dbReference>
<dbReference type="PANTHER" id="PTHR24254">
    <property type="entry name" value="PROTHROMBIN"/>
    <property type="match status" value="1"/>
</dbReference>
<dbReference type="PANTHER" id="PTHR24254:SF10">
    <property type="entry name" value="PROTHROMBIN"/>
    <property type="match status" value="1"/>
</dbReference>
<dbReference type="Pfam" id="PF00594">
    <property type="entry name" value="Gla"/>
    <property type="match status" value="1"/>
</dbReference>
<dbReference type="Pfam" id="PF00051">
    <property type="entry name" value="Kringle"/>
    <property type="match status" value="2"/>
</dbReference>
<dbReference type="Pfam" id="PF09396">
    <property type="entry name" value="Thrombin_light"/>
    <property type="match status" value="1"/>
</dbReference>
<dbReference type="Pfam" id="PF00089">
    <property type="entry name" value="Trypsin"/>
    <property type="match status" value="1"/>
</dbReference>
<dbReference type="PIRSF" id="PIRSF001149">
    <property type="entry name" value="Thrombin"/>
    <property type="match status" value="1"/>
</dbReference>
<dbReference type="PRINTS" id="PR00722">
    <property type="entry name" value="CHYMOTRYPSIN"/>
</dbReference>
<dbReference type="PRINTS" id="PR00001">
    <property type="entry name" value="GLABLOOD"/>
</dbReference>
<dbReference type="PRINTS" id="PR00018">
    <property type="entry name" value="KRINGLE"/>
</dbReference>
<dbReference type="PRINTS" id="PR01505">
    <property type="entry name" value="PROTHROMBIN"/>
</dbReference>
<dbReference type="SMART" id="SM00069">
    <property type="entry name" value="GLA"/>
    <property type="match status" value="1"/>
</dbReference>
<dbReference type="SMART" id="SM00130">
    <property type="entry name" value="KR"/>
    <property type="match status" value="2"/>
</dbReference>
<dbReference type="SMART" id="SM00020">
    <property type="entry name" value="Tryp_SPc"/>
    <property type="match status" value="1"/>
</dbReference>
<dbReference type="SUPFAM" id="SSF57630">
    <property type="entry name" value="GLA-domain"/>
    <property type="match status" value="1"/>
</dbReference>
<dbReference type="SUPFAM" id="SSF57440">
    <property type="entry name" value="Kringle-like"/>
    <property type="match status" value="2"/>
</dbReference>
<dbReference type="SUPFAM" id="SSF50494">
    <property type="entry name" value="Trypsin-like serine proteases"/>
    <property type="match status" value="1"/>
</dbReference>
<dbReference type="PROSITE" id="PS00011">
    <property type="entry name" value="GLA_1"/>
    <property type="match status" value="1"/>
</dbReference>
<dbReference type="PROSITE" id="PS50998">
    <property type="entry name" value="GLA_2"/>
    <property type="match status" value="1"/>
</dbReference>
<dbReference type="PROSITE" id="PS00021">
    <property type="entry name" value="KRINGLE_1"/>
    <property type="match status" value="2"/>
</dbReference>
<dbReference type="PROSITE" id="PS50070">
    <property type="entry name" value="KRINGLE_2"/>
    <property type="match status" value="2"/>
</dbReference>
<dbReference type="PROSITE" id="PS50240">
    <property type="entry name" value="TRYPSIN_DOM"/>
    <property type="match status" value="1"/>
</dbReference>
<dbReference type="PROSITE" id="PS00134">
    <property type="entry name" value="TRYPSIN_HIS"/>
    <property type="match status" value="1"/>
</dbReference>
<dbReference type="PROSITE" id="PS00135">
    <property type="entry name" value="TRYPSIN_SER"/>
    <property type="match status" value="1"/>
</dbReference>
<gene>
    <name type="primary">F2</name>
</gene>
<sequence length="623" mass="70066">MAHVGGLWLHGCLALAVLVSLVHSQHVFMAPQQALSLLQRARRANSGFFEEMRKGNLERECVEEQCSREEAYEALESPSETDAFWAKYTACESVRKSREKLVECLEGNCAEGLGMNYRGNISVTRSGIECQLWRSRYPHKPEVNSTMYPGADLRENFCRNPDGSITGPWCYTTSPTVRREACSIPVCGQGRVTAELIPRSGGSTVNVSPPLETCVPERGRQYQGRLAVTSHGSPCLAWGSSQAKALSKDQDFNPAVPLVENFCRNPDGDQEGAWCYVAGQPGDFEYCDLDYCEEPVDEEVGDALGENADAAIEGRTTADDFQPFFNEKTFGAGEADCGLRPLFEKSSLEDKTEKELFESYIEGRIVEGSDAEIGLAPWQVMIFRKSPQELLCGASLISDRWVLTAAHCLLYPPWDKNFTENDLLVRIGKHSRTRYERNIEKISMLEKIYIHPRYNWRENLDRDIALLKLRKPITFSDYIHPVCLPDKETATKLLRAGYKGRVTGWGNLKETWTTSASEVQPSVLQVVNLPIVERLVCKASTRIRITDNMFCAGYKPDEGKRGDACEGDSGGPFVMKSPFNNRWYQMGIVSWGEGCDRDGKYGFYTHVFRLKKWMQKVIDRFGG</sequence>
<evidence type="ECO:0000250" key="1"/>
<evidence type="ECO:0000250" key="2">
    <source>
        <dbReference type="UniProtKB" id="P00734"/>
    </source>
</evidence>
<evidence type="ECO:0000250" key="3">
    <source>
        <dbReference type="UniProtKB" id="P00735"/>
    </source>
</evidence>
<evidence type="ECO:0000255" key="4"/>
<evidence type="ECO:0000255" key="5">
    <source>
        <dbReference type="PROSITE-ProRule" id="PRU00121"/>
    </source>
</evidence>
<evidence type="ECO:0000255" key="6">
    <source>
        <dbReference type="PROSITE-ProRule" id="PRU00274"/>
    </source>
</evidence>
<evidence type="ECO:0000255" key="7">
    <source>
        <dbReference type="PROSITE-ProRule" id="PRU00463"/>
    </source>
</evidence>
<name>THRB_PIG</name>